<organism>
    <name type="scientific">Wolinella succinogenes (strain ATCC 29543 / DSM 1740 / CCUG 13145 / JCM 31913 / LMG 7466 / NCTC 11488 / FDC 602W)</name>
    <name type="common">Vibrio succinogenes</name>
    <dbReference type="NCBI Taxonomy" id="273121"/>
    <lineage>
        <taxon>Bacteria</taxon>
        <taxon>Pseudomonadati</taxon>
        <taxon>Campylobacterota</taxon>
        <taxon>Epsilonproteobacteria</taxon>
        <taxon>Campylobacterales</taxon>
        <taxon>Helicobacteraceae</taxon>
        <taxon>Wolinella</taxon>
    </lineage>
</organism>
<reference key="1">
    <citation type="journal article" date="2003" name="Proc. Natl. Acad. Sci. U.S.A.">
        <title>Complete genome sequence and analysis of Wolinella succinogenes.</title>
        <authorList>
            <person name="Baar C."/>
            <person name="Eppinger M."/>
            <person name="Raddatz G."/>
            <person name="Simon J."/>
            <person name="Lanz C."/>
            <person name="Klimmek O."/>
            <person name="Nandakumar R."/>
            <person name="Gross R."/>
            <person name="Rosinus A."/>
            <person name="Keller H."/>
            <person name="Jagtap P."/>
            <person name="Linke B."/>
            <person name="Meyer F."/>
            <person name="Lederer H."/>
            <person name="Schuster S.C."/>
        </authorList>
    </citation>
    <scope>NUCLEOTIDE SEQUENCE [LARGE SCALE GENOMIC DNA]</scope>
    <source>
        <strain>ATCC 29543 / DSM 1740 / CCUG 13145 / JCM 31913 / LMG 7466 / NCTC 11488 / FDC 602W</strain>
    </source>
</reference>
<dbReference type="EMBL" id="BX571661">
    <property type="protein sequence ID" value="CAE10723.1"/>
    <property type="molecule type" value="Genomic_DNA"/>
</dbReference>
<dbReference type="RefSeq" id="WP_011139507.1">
    <property type="nucleotide sequence ID" value="NC_005090.1"/>
</dbReference>
<dbReference type="SMR" id="Q7M8F3"/>
<dbReference type="STRING" id="273121.WS1696"/>
<dbReference type="KEGG" id="wsu:WS1696"/>
<dbReference type="eggNOG" id="COG0361">
    <property type="taxonomic scope" value="Bacteria"/>
</dbReference>
<dbReference type="HOGENOM" id="CLU_151267_1_0_7"/>
<dbReference type="Proteomes" id="UP000000422">
    <property type="component" value="Chromosome"/>
</dbReference>
<dbReference type="GO" id="GO:0005829">
    <property type="term" value="C:cytosol"/>
    <property type="evidence" value="ECO:0007669"/>
    <property type="project" value="TreeGrafter"/>
</dbReference>
<dbReference type="GO" id="GO:0043022">
    <property type="term" value="F:ribosome binding"/>
    <property type="evidence" value="ECO:0007669"/>
    <property type="project" value="UniProtKB-UniRule"/>
</dbReference>
<dbReference type="GO" id="GO:0019843">
    <property type="term" value="F:rRNA binding"/>
    <property type="evidence" value="ECO:0007669"/>
    <property type="project" value="UniProtKB-UniRule"/>
</dbReference>
<dbReference type="GO" id="GO:0003743">
    <property type="term" value="F:translation initiation factor activity"/>
    <property type="evidence" value="ECO:0007669"/>
    <property type="project" value="UniProtKB-UniRule"/>
</dbReference>
<dbReference type="CDD" id="cd04451">
    <property type="entry name" value="S1_IF1"/>
    <property type="match status" value="1"/>
</dbReference>
<dbReference type="FunFam" id="2.40.50.140:FF:000002">
    <property type="entry name" value="Translation initiation factor IF-1"/>
    <property type="match status" value="1"/>
</dbReference>
<dbReference type="Gene3D" id="2.40.50.140">
    <property type="entry name" value="Nucleic acid-binding proteins"/>
    <property type="match status" value="1"/>
</dbReference>
<dbReference type="HAMAP" id="MF_00075">
    <property type="entry name" value="IF_1"/>
    <property type="match status" value="1"/>
</dbReference>
<dbReference type="InterPro" id="IPR012340">
    <property type="entry name" value="NA-bd_OB-fold"/>
</dbReference>
<dbReference type="InterPro" id="IPR006196">
    <property type="entry name" value="RNA-binding_domain_S1_IF1"/>
</dbReference>
<dbReference type="InterPro" id="IPR003029">
    <property type="entry name" value="S1_domain"/>
</dbReference>
<dbReference type="InterPro" id="IPR004368">
    <property type="entry name" value="TIF_IF1"/>
</dbReference>
<dbReference type="NCBIfam" id="TIGR00008">
    <property type="entry name" value="infA"/>
    <property type="match status" value="1"/>
</dbReference>
<dbReference type="PANTHER" id="PTHR33370">
    <property type="entry name" value="TRANSLATION INITIATION FACTOR IF-1, CHLOROPLASTIC"/>
    <property type="match status" value="1"/>
</dbReference>
<dbReference type="PANTHER" id="PTHR33370:SF1">
    <property type="entry name" value="TRANSLATION INITIATION FACTOR IF-1, CHLOROPLASTIC"/>
    <property type="match status" value="1"/>
</dbReference>
<dbReference type="Pfam" id="PF01176">
    <property type="entry name" value="eIF-1a"/>
    <property type="match status" value="1"/>
</dbReference>
<dbReference type="SMART" id="SM00316">
    <property type="entry name" value="S1"/>
    <property type="match status" value="1"/>
</dbReference>
<dbReference type="SUPFAM" id="SSF50249">
    <property type="entry name" value="Nucleic acid-binding proteins"/>
    <property type="match status" value="1"/>
</dbReference>
<dbReference type="PROSITE" id="PS50832">
    <property type="entry name" value="S1_IF1_TYPE"/>
    <property type="match status" value="1"/>
</dbReference>
<proteinExistence type="inferred from homology"/>
<protein>
    <recommendedName>
        <fullName evidence="1">Translation initiation factor IF-1</fullName>
    </recommendedName>
</protein>
<name>IF1_WOLSU</name>
<sequence length="72" mass="8353">MAKDDVIEVDGKVIEALPNATFRVELDNKHVILCHIAGRMRMHYIKILPGDRVKIELTPYSLDKGRITFRYK</sequence>
<accession>Q7M8F3</accession>
<feature type="chain" id="PRO_0000095907" description="Translation initiation factor IF-1">
    <location>
        <begin position="1"/>
        <end position="72"/>
    </location>
</feature>
<feature type="domain" description="S1-like" evidence="1">
    <location>
        <begin position="1"/>
        <end position="72"/>
    </location>
</feature>
<evidence type="ECO:0000255" key="1">
    <source>
        <dbReference type="HAMAP-Rule" id="MF_00075"/>
    </source>
</evidence>
<comment type="function">
    <text evidence="1">One of the essential components for the initiation of protein synthesis. Stabilizes the binding of IF-2 and IF-3 on the 30S subunit to which N-formylmethionyl-tRNA(fMet) subsequently binds. Helps modulate mRNA selection, yielding the 30S pre-initiation complex (PIC). Upon addition of the 50S ribosomal subunit IF-1, IF-2 and IF-3 are released leaving the mature 70S translation initiation complex.</text>
</comment>
<comment type="subunit">
    <text evidence="1">Component of the 30S ribosomal translation pre-initiation complex which assembles on the 30S ribosome in the order IF-2 and IF-3, IF-1 and N-formylmethionyl-tRNA(fMet); mRNA recruitment can occur at any time during PIC assembly.</text>
</comment>
<comment type="subcellular location">
    <subcellularLocation>
        <location evidence="1">Cytoplasm</location>
    </subcellularLocation>
</comment>
<comment type="similarity">
    <text evidence="1">Belongs to the IF-1 family.</text>
</comment>
<keyword id="KW-0963">Cytoplasm</keyword>
<keyword id="KW-0396">Initiation factor</keyword>
<keyword id="KW-0648">Protein biosynthesis</keyword>
<keyword id="KW-1185">Reference proteome</keyword>
<keyword id="KW-0694">RNA-binding</keyword>
<keyword id="KW-0699">rRNA-binding</keyword>
<gene>
    <name evidence="1" type="primary">infA</name>
    <name type="ordered locus">WS1696</name>
</gene>